<accession>Q1R5V3</accession>
<gene>
    <name evidence="1" type="primary">rpoB</name>
    <name type="ordered locus">UTI89_C3832</name>
</gene>
<keyword id="KW-0007">Acetylation</keyword>
<keyword id="KW-0240">DNA-directed RNA polymerase</keyword>
<keyword id="KW-0548">Nucleotidyltransferase</keyword>
<keyword id="KW-0804">Transcription</keyword>
<keyword id="KW-0808">Transferase</keyword>
<comment type="function">
    <text evidence="1">DNA-dependent RNA polymerase catalyzes the transcription of DNA into RNA using the four ribonucleoside triphosphates as substrates.</text>
</comment>
<comment type="catalytic activity">
    <reaction evidence="1">
        <text>RNA(n) + a ribonucleoside 5'-triphosphate = RNA(n+1) + diphosphate</text>
        <dbReference type="Rhea" id="RHEA:21248"/>
        <dbReference type="Rhea" id="RHEA-COMP:14527"/>
        <dbReference type="Rhea" id="RHEA-COMP:17342"/>
        <dbReference type="ChEBI" id="CHEBI:33019"/>
        <dbReference type="ChEBI" id="CHEBI:61557"/>
        <dbReference type="ChEBI" id="CHEBI:140395"/>
        <dbReference type="EC" id="2.7.7.6"/>
    </reaction>
</comment>
<comment type="subunit">
    <text evidence="1">The RNAP catalytic core consists of 2 alpha, 1 beta, 1 beta' and 1 omega subunit. When a sigma factor is associated with the core the holoenzyme is formed, which can initiate transcription.</text>
</comment>
<comment type="similarity">
    <text evidence="1">Belongs to the RNA polymerase beta chain family.</text>
</comment>
<comment type="sequence caution" evidence="2">
    <conflict type="erroneous initiation">
        <sequence resource="EMBL-CDS" id="ABE09261"/>
    </conflict>
</comment>
<sequence>MVYSYTEKKRIRKDFGKRPQVLDVPYLLSIQLDSFQKFIEQDPEGQYGLEAAFRSVFPIQSYSGNSELQYVSYRLGEPVFDVQECQIRGVTYSAPLRVKLRLVIYEREAPEGTVKDIKEQEVYMGEIPLMTDNGTFVINGTERVIVSQLHRSPGVFFDSDKGKTHSSGKVLYNARIIPYRGSWLDFEFDPKDNLFVRIDRRRKLPATIILRALNYTTEQILDLFFEKVIFEIRDNKLQMELVPERLRGETASFDIEANGKVYVEKGRRITARHIRQLEKDDVKLIEVPVEYIAGKVVAKDYIDESTGELICAANMELSLDLLAKLSQSGHKRIETLFTNDLDHGPYISETLRVDPTNDRLSALVEIYRMMRPGEPPTREAAESLFENLFFSEDRYDLSAVGRMKFNRSLLREEIEGSGILSKDDIIDVMKKLIDIRNGKGEVDDIDHLGNRRIRSVGEMAENQFRVGLVRVERAVKERLSLGDLDTLMPQDMINAKPISAAVKEFFGSSQLSQFMDQNNPLSEITHKRRISALGPGGLTRERAGFEVRDVHPTHYGRVCPIETPEGPNIGLINSLSVYAQTNEYGFLETPYRKVTDGVVTDEIHYLSAIEEGNYVIAQANSNLDEEGHFVEDLVTCRSKGESSLFSRDQVDYMDVSTQQVVSVGASLIPFLEHDDANRALMGANMQRQAVPTLRADKPLVGTGMERAVAVDSGVTAVAKRGGVVQYVDASRIVIKVNEDEMYPGEAGIDIYNLTKYTRSNQNTCINQMPCVSLGEPVERGDVLADGPSTDLGELALGQNMRVAFMPWNGYNFEDSILVSERVVQEDRFTTIHIQELACVSRDTKLGPEEITADIPNVGEAALSKLDESGIVYIGAEVTGGDILVGKVTPKGETQLTPEEKLLRAIFGEKASDVKDSSLRVPNGVSGTVIDVQVFTRDGVEKDKRALEIEEMQLKQAKKDLSEELQILEAGLFSRIRAVLVAGGVEAEKLDKLPRDRWLELGLTDEEKQNQLEQLAEQYDELKHEFEKKLEAKRRKITQGDDLAPGVLKIVKVYLAVKRRIQPGDKMAGRHGNKGVISKINPIEDMPYDENGTPVDIVLNPLGVPSRMNIGQILETHLGMAAKGIGDKINAMLKQQQEVAKLREFIQRAYDLGADVRQKVDLSTFSDEEVMRLAENLRKGMPIATPVFDGAKEAEIKELLKLGDLPTSGQIRLYDGRTGEQFERPVTVGYMYMLKLNHLVDDKMHARSTGSYSLVTQQPLGGKAQFGGQRFGEMEVWALEAYGAAYTLQEMLTVKSDDVNGRTKMYKNIVDGNHQMEPGMPESFNVLLKEIRSLGINIELEDE</sequence>
<protein>
    <recommendedName>
        <fullName evidence="1">DNA-directed RNA polymerase subunit beta</fullName>
        <shortName evidence="1">RNAP subunit beta</shortName>
        <ecNumber evidence="1">2.7.7.6</ecNumber>
    </recommendedName>
    <alternativeName>
        <fullName evidence="1">RNA polymerase subunit beta</fullName>
    </alternativeName>
    <alternativeName>
        <fullName evidence="1">Transcriptase subunit beta</fullName>
    </alternativeName>
</protein>
<evidence type="ECO:0000255" key="1">
    <source>
        <dbReference type="HAMAP-Rule" id="MF_01321"/>
    </source>
</evidence>
<evidence type="ECO:0000305" key="2"/>
<name>RPOB_ECOUT</name>
<proteinExistence type="inferred from homology"/>
<organism>
    <name type="scientific">Escherichia coli (strain UTI89 / UPEC)</name>
    <dbReference type="NCBI Taxonomy" id="364106"/>
    <lineage>
        <taxon>Bacteria</taxon>
        <taxon>Pseudomonadati</taxon>
        <taxon>Pseudomonadota</taxon>
        <taxon>Gammaproteobacteria</taxon>
        <taxon>Enterobacterales</taxon>
        <taxon>Enterobacteriaceae</taxon>
        <taxon>Escherichia</taxon>
    </lineage>
</organism>
<reference key="1">
    <citation type="journal article" date="2006" name="Proc. Natl. Acad. Sci. U.S.A.">
        <title>Identification of genes subject to positive selection in uropathogenic strains of Escherichia coli: a comparative genomics approach.</title>
        <authorList>
            <person name="Chen S.L."/>
            <person name="Hung C.-S."/>
            <person name="Xu J."/>
            <person name="Reigstad C.S."/>
            <person name="Magrini V."/>
            <person name="Sabo A."/>
            <person name="Blasiar D."/>
            <person name="Bieri T."/>
            <person name="Meyer R.R."/>
            <person name="Ozersky P."/>
            <person name="Armstrong J.R."/>
            <person name="Fulton R.S."/>
            <person name="Latreille J.P."/>
            <person name="Spieth J."/>
            <person name="Hooton T.M."/>
            <person name="Mardis E.R."/>
            <person name="Hultgren S.J."/>
            <person name="Gordon J.I."/>
        </authorList>
    </citation>
    <scope>NUCLEOTIDE SEQUENCE [LARGE SCALE GENOMIC DNA]</scope>
    <source>
        <strain>UTI89 / UPEC</strain>
    </source>
</reference>
<dbReference type="EC" id="2.7.7.6" evidence="1"/>
<dbReference type="EMBL" id="CP000243">
    <property type="protein sequence ID" value="ABE09261.1"/>
    <property type="status" value="ALT_INIT"/>
    <property type="molecule type" value="Genomic_DNA"/>
</dbReference>
<dbReference type="RefSeq" id="WP_000263098.1">
    <property type="nucleotide sequence ID" value="NZ_CP064825.1"/>
</dbReference>
<dbReference type="SMR" id="Q1R5V3"/>
<dbReference type="GeneID" id="93777907"/>
<dbReference type="KEGG" id="eci:UTI89_C3832"/>
<dbReference type="HOGENOM" id="CLU_000524_4_0_6"/>
<dbReference type="Proteomes" id="UP000001952">
    <property type="component" value="Chromosome"/>
</dbReference>
<dbReference type="GO" id="GO:0000428">
    <property type="term" value="C:DNA-directed RNA polymerase complex"/>
    <property type="evidence" value="ECO:0007669"/>
    <property type="project" value="UniProtKB-KW"/>
</dbReference>
<dbReference type="GO" id="GO:0003677">
    <property type="term" value="F:DNA binding"/>
    <property type="evidence" value="ECO:0007669"/>
    <property type="project" value="UniProtKB-UniRule"/>
</dbReference>
<dbReference type="GO" id="GO:0003899">
    <property type="term" value="F:DNA-directed RNA polymerase activity"/>
    <property type="evidence" value="ECO:0007669"/>
    <property type="project" value="UniProtKB-UniRule"/>
</dbReference>
<dbReference type="GO" id="GO:0032549">
    <property type="term" value="F:ribonucleoside binding"/>
    <property type="evidence" value="ECO:0007669"/>
    <property type="project" value="InterPro"/>
</dbReference>
<dbReference type="GO" id="GO:0006351">
    <property type="term" value="P:DNA-templated transcription"/>
    <property type="evidence" value="ECO:0007669"/>
    <property type="project" value="UniProtKB-UniRule"/>
</dbReference>
<dbReference type="CDD" id="cd00653">
    <property type="entry name" value="RNA_pol_B_RPB2"/>
    <property type="match status" value="1"/>
</dbReference>
<dbReference type="FunFam" id="2.30.150.10:FF:000001">
    <property type="entry name" value="DNA-directed RNA polymerase subunit beta"/>
    <property type="match status" value="1"/>
</dbReference>
<dbReference type="FunFam" id="2.40.270.10:FF:000003">
    <property type="entry name" value="DNA-directed RNA polymerase subunit beta"/>
    <property type="match status" value="1"/>
</dbReference>
<dbReference type="FunFam" id="2.40.270.10:FF:000004">
    <property type="entry name" value="DNA-directed RNA polymerase subunit beta"/>
    <property type="match status" value="1"/>
</dbReference>
<dbReference type="FunFam" id="2.40.50.100:FF:000006">
    <property type="entry name" value="DNA-directed RNA polymerase subunit beta"/>
    <property type="match status" value="1"/>
</dbReference>
<dbReference type="FunFam" id="2.40.50.150:FF:000001">
    <property type="entry name" value="DNA-directed RNA polymerase subunit beta"/>
    <property type="match status" value="1"/>
</dbReference>
<dbReference type="FunFam" id="3.90.1100.10:FF:000002">
    <property type="entry name" value="DNA-directed RNA polymerase subunit beta"/>
    <property type="match status" value="1"/>
</dbReference>
<dbReference type="FunFam" id="3.90.1110.10:FF:000001">
    <property type="entry name" value="DNA-directed RNA polymerase subunit beta"/>
    <property type="match status" value="1"/>
</dbReference>
<dbReference type="FunFam" id="3.90.1110.10:FF:000004">
    <property type="entry name" value="DNA-directed RNA polymerase subunit beta"/>
    <property type="match status" value="1"/>
</dbReference>
<dbReference type="FunFam" id="3.90.1800.10:FF:000001">
    <property type="entry name" value="DNA-directed RNA polymerase subunit beta"/>
    <property type="match status" value="1"/>
</dbReference>
<dbReference type="Gene3D" id="2.40.50.100">
    <property type="match status" value="1"/>
</dbReference>
<dbReference type="Gene3D" id="2.40.50.150">
    <property type="match status" value="1"/>
</dbReference>
<dbReference type="Gene3D" id="3.90.1100.10">
    <property type="match status" value="2"/>
</dbReference>
<dbReference type="Gene3D" id="6.10.140.1670">
    <property type="match status" value="1"/>
</dbReference>
<dbReference type="Gene3D" id="2.30.150.10">
    <property type="entry name" value="DNA-directed RNA polymerase, beta subunit, external 1 domain"/>
    <property type="match status" value="1"/>
</dbReference>
<dbReference type="Gene3D" id="2.40.270.10">
    <property type="entry name" value="DNA-directed RNA polymerase, subunit 2, domain 6"/>
    <property type="match status" value="1"/>
</dbReference>
<dbReference type="Gene3D" id="3.90.1800.10">
    <property type="entry name" value="RNA polymerase alpha subunit dimerisation domain"/>
    <property type="match status" value="1"/>
</dbReference>
<dbReference type="Gene3D" id="3.90.1110.10">
    <property type="entry name" value="RNA polymerase Rpb2, domain 2"/>
    <property type="match status" value="1"/>
</dbReference>
<dbReference type="HAMAP" id="MF_01321">
    <property type="entry name" value="RNApol_bact_RpoB"/>
    <property type="match status" value="1"/>
</dbReference>
<dbReference type="InterPro" id="IPR042107">
    <property type="entry name" value="DNA-dir_RNA_pol_bsu_ext_1_sf"/>
</dbReference>
<dbReference type="InterPro" id="IPR019462">
    <property type="entry name" value="DNA-dir_RNA_pol_bsu_external_1"/>
</dbReference>
<dbReference type="InterPro" id="IPR015712">
    <property type="entry name" value="DNA-dir_RNA_pol_su2"/>
</dbReference>
<dbReference type="InterPro" id="IPR007120">
    <property type="entry name" value="DNA-dir_RNAP_su2_dom"/>
</dbReference>
<dbReference type="InterPro" id="IPR037033">
    <property type="entry name" value="DNA-dir_RNAP_su2_hyb_sf"/>
</dbReference>
<dbReference type="InterPro" id="IPR010243">
    <property type="entry name" value="RNA_pol_bsu_bac"/>
</dbReference>
<dbReference type="InterPro" id="IPR007121">
    <property type="entry name" value="RNA_pol_bsu_CS"/>
</dbReference>
<dbReference type="InterPro" id="IPR007644">
    <property type="entry name" value="RNA_pol_bsu_protrusion"/>
</dbReference>
<dbReference type="InterPro" id="IPR007642">
    <property type="entry name" value="RNA_pol_Rpb2_2"/>
</dbReference>
<dbReference type="InterPro" id="IPR037034">
    <property type="entry name" value="RNA_pol_Rpb2_2_sf"/>
</dbReference>
<dbReference type="InterPro" id="IPR007645">
    <property type="entry name" value="RNA_pol_Rpb2_3"/>
</dbReference>
<dbReference type="InterPro" id="IPR007641">
    <property type="entry name" value="RNA_pol_Rpb2_7"/>
</dbReference>
<dbReference type="InterPro" id="IPR014724">
    <property type="entry name" value="RNA_pol_RPB2_OB-fold"/>
</dbReference>
<dbReference type="NCBIfam" id="NF001616">
    <property type="entry name" value="PRK00405.1"/>
    <property type="match status" value="1"/>
</dbReference>
<dbReference type="NCBIfam" id="TIGR02013">
    <property type="entry name" value="rpoB"/>
    <property type="match status" value="1"/>
</dbReference>
<dbReference type="PANTHER" id="PTHR20856">
    <property type="entry name" value="DNA-DIRECTED RNA POLYMERASE I SUBUNIT 2"/>
    <property type="match status" value="1"/>
</dbReference>
<dbReference type="Pfam" id="PF04563">
    <property type="entry name" value="RNA_pol_Rpb2_1"/>
    <property type="match status" value="1"/>
</dbReference>
<dbReference type="Pfam" id="PF04561">
    <property type="entry name" value="RNA_pol_Rpb2_2"/>
    <property type="match status" value="2"/>
</dbReference>
<dbReference type="Pfam" id="PF04565">
    <property type="entry name" value="RNA_pol_Rpb2_3"/>
    <property type="match status" value="1"/>
</dbReference>
<dbReference type="Pfam" id="PF10385">
    <property type="entry name" value="RNA_pol_Rpb2_45"/>
    <property type="match status" value="1"/>
</dbReference>
<dbReference type="Pfam" id="PF00562">
    <property type="entry name" value="RNA_pol_Rpb2_6"/>
    <property type="match status" value="1"/>
</dbReference>
<dbReference type="Pfam" id="PF04560">
    <property type="entry name" value="RNA_pol_Rpb2_7"/>
    <property type="match status" value="1"/>
</dbReference>
<dbReference type="SUPFAM" id="SSF64484">
    <property type="entry name" value="beta and beta-prime subunits of DNA dependent RNA-polymerase"/>
    <property type="match status" value="1"/>
</dbReference>
<dbReference type="PROSITE" id="PS01166">
    <property type="entry name" value="RNA_POL_BETA"/>
    <property type="match status" value="1"/>
</dbReference>
<feature type="chain" id="PRO_0000300311" description="DNA-directed RNA polymerase subunit beta">
    <location>
        <begin position="1"/>
        <end position="1342"/>
    </location>
</feature>
<feature type="modified residue" description="N6-acetyllysine" evidence="1">
    <location>
        <position position="1022"/>
    </location>
</feature>
<feature type="modified residue" description="N6-acetyllysine" evidence="1">
    <location>
        <position position="1200"/>
    </location>
</feature>